<evidence type="ECO:0000250" key="1">
    <source>
        <dbReference type="UniProtKB" id="A0A0A1HA03"/>
    </source>
</evidence>
<evidence type="ECO:0000250" key="2">
    <source>
        <dbReference type="UniProtKB" id="P51094"/>
    </source>
</evidence>
<evidence type="ECO:0000269" key="3">
    <source>
    </source>
</evidence>
<evidence type="ECO:0000303" key="4">
    <source>
    </source>
</evidence>
<evidence type="ECO:0000305" key="5"/>
<name>ZOG_PHALU</name>
<organism>
    <name type="scientific">Phaseolus lunatus</name>
    <name type="common">Lima bean</name>
    <name type="synonym">Phaseolus limensis</name>
    <dbReference type="NCBI Taxonomy" id="3884"/>
    <lineage>
        <taxon>Eukaryota</taxon>
        <taxon>Viridiplantae</taxon>
        <taxon>Streptophyta</taxon>
        <taxon>Embryophyta</taxon>
        <taxon>Tracheophyta</taxon>
        <taxon>Spermatophyta</taxon>
        <taxon>Magnoliopsida</taxon>
        <taxon>eudicotyledons</taxon>
        <taxon>Gunneridae</taxon>
        <taxon>Pentapetalae</taxon>
        <taxon>rosids</taxon>
        <taxon>fabids</taxon>
        <taxon>Fabales</taxon>
        <taxon>Fabaceae</taxon>
        <taxon>Papilionoideae</taxon>
        <taxon>50 kb inversion clade</taxon>
        <taxon>NPAAA clade</taxon>
        <taxon>indigoferoid/millettioid clade</taxon>
        <taxon>Phaseoleae</taxon>
        <taxon>Phaseolus</taxon>
    </lineage>
</organism>
<sequence>MALNDKSIPHETKVVVLLIPFPAQGHLNQFLHLSRLIVAQNIPVHYVGTVTHIRQATLRYNNPTSNIHFHAFQVPPFVSPPPNPEDDFPSHLIPSFEASAHLREPVGKLLQSLSSQAKRVVVINDSLMASVAQDAANISNVENYTFHSFSAFNTSGDFWEEMGKPPVGDFHFPEFPSLEGCIAAQFKGFRTAQYEFRKFNNGDIYNTSRVIEGPYVELLELFNGGKKVWALGPFNPLAVEKKDSIGFRHPCMEWLDKQEPSSVIYISFGTTTALRDEQIQQIATGLEQSKQKFIWVLREADKGDIFAGSEAKRYELPKGFEERVEGMGLVVRDWAPQLEILSHSSTGGFMSHCGWNSCLESITMGVPIATWPMHSDQPRNAVLVTEVLKVGLVVKDWAQRNSLVSASVVENGVRRLMETKEGDEMRQRAVRLKNAIHRSMDEGGVSHMEMGSFIAHISK</sequence>
<accession>Q9ZSK5</accession>
<protein>
    <recommendedName>
        <fullName evidence="4">Zeatin O-glucosyltransferase</fullName>
        <ecNumber evidence="3">2.4.1.203</ecNumber>
    </recommendedName>
    <alternativeName>
        <fullName evidence="5">Trans-zeatin O-beta-D-glucosyltransferase</fullName>
    </alternativeName>
</protein>
<comment type="function">
    <text evidence="3">May regulate active versus storage forms of cytokinins, and could have an impact on seed growth. Can also use UDP-xylose to catalyze the formation of O-xylosylzeatin but at much lower affinity.</text>
</comment>
<comment type="catalytic activity">
    <reaction evidence="3">
        <text>trans-zeatin + UDP-alpha-D-glucose = O-beta-D-glucosyl-trans-zeatin + UDP + H(+)</text>
        <dbReference type="Rhea" id="RHEA:23224"/>
        <dbReference type="ChEBI" id="CHEBI:15378"/>
        <dbReference type="ChEBI" id="CHEBI:16522"/>
        <dbReference type="ChEBI" id="CHEBI:38266"/>
        <dbReference type="ChEBI" id="CHEBI:58223"/>
        <dbReference type="ChEBI" id="CHEBI:58885"/>
        <dbReference type="EC" id="2.4.1.203"/>
    </reaction>
    <physiologicalReaction direction="left-to-right" evidence="3">
        <dbReference type="Rhea" id="RHEA:23225"/>
    </physiologicalReaction>
</comment>
<comment type="similarity">
    <text evidence="5">Belongs to the UDP-glycosyltransferase family.</text>
</comment>
<dbReference type="EC" id="2.4.1.203" evidence="3"/>
<dbReference type="EMBL" id="AF101972">
    <property type="protein sequence ID" value="AAD04166.1"/>
    <property type="molecule type" value="mRNA"/>
</dbReference>
<dbReference type="SMR" id="Q9ZSK5"/>
<dbReference type="CAZy" id="GT1">
    <property type="family name" value="Glycosyltransferase Family 1"/>
</dbReference>
<dbReference type="KEGG" id="ag:AAD04166"/>
<dbReference type="BioCyc" id="MetaCyc:PLZOG1-MONOMER"/>
<dbReference type="BRENDA" id="2.4.1.203">
    <property type="organism ID" value="4740"/>
</dbReference>
<dbReference type="SABIO-RK" id="Q9ZSK5"/>
<dbReference type="GO" id="GO:0050403">
    <property type="term" value="F:trans-zeatin O-beta-D-glucosyltransferase activity"/>
    <property type="evidence" value="ECO:0000314"/>
    <property type="project" value="AgBase"/>
</dbReference>
<dbReference type="GO" id="GO:0050404">
    <property type="term" value="F:zeatin O-beta-D-xylosyltransferase activity"/>
    <property type="evidence" value="ECO:0000314"/>
    <property type="project" value="AgBase"/>
</dbReference>
<dbReference type="GO" id="GO:0009690">
    <property type="term" value="P:cytokinin metabolic process"/>
    <property type="evidence" value="ECO:0000304"/>
    <property type="project" value="AgBase"/>
</dbReference>
<dbReference type="GO" id="GO:0048439">
    <property type="term" value="P:flower morphogenesis"/>
    <property type="evidence" value="ECO:0000314"/>
    <property type="project" value="AgBase"/>
</dbReference>
<dbReference type="GO" id="GO:0009965">
    <property type="term" value="P:leaf morphogenesis"/>
    <property type="evidence" value="ECO:0000314"/>
    <property type="project" value="AgBase"/>
</dbReference>
<dbReference type="GO" id="GO:0045926">
    <property type="term" value="P:negative regulation of growth"/>
    <property type="evidence" value="ECO:0000314"/>
    <property type="project" value="AgBase"/>
</dbReference>
<dbReference type="GO" id="GO:0006486">
    <property type="term" value="P:protein glycosylation"/>
    <property type="evidence" value="ECO:0000314"/>
    <property type="project" value="AgBase"/>
</dbReference>
<dbReference type="GO" id="GO:0010380">
    <property type="term" value="P:regulation of chlorophyll biosynthetic process"/>
    <property type="evidence" value="ECO:0000314"/>
    <property type="project" value="AgBase"/>
</dbReference>
<dbReference type="GO" id="GO:0010083">
    <property type="term" value="P:regulation of vegetative meristem growth"/>
    <property type="evidence" value="ECO:0000314"/>
    <property type="project" value="AgBase"/>
</dbReference>
<dbReference type="GO" id="GO:0010015">
    <property type="term" value="P:root morphogenesis"/>
    <property type="evidence" value="ECO:0000314"/>
    <property type="project" value="AgBase"/>
</dbReference>
<dbReference type="GO" id="GO:0048316">
    <property type="term" value="P:seed development"/>
    <property type="evidence" value="ECO:0000314"/>
    <property type="project" value="AgBase"/>
</dbReference>
<dbReference type="CDD" id="cd03784">
    <property type="entry name" value="GT1_Gtf-like"/>
    <property type="match status" value="1"/>
</dbReference>
<dbReference type="FunFam" id="3.40.50.2000:FF:000060">
    <property type="entry name" value="Glycosyltransferase"/>
    <property type="match status" value="1"/>
</dbReference>
<dbReference type="FunFam" id="3.40.50.2000:FF:000238">
    <property type="entry name" value="Glycosyltransferase"/>
    <property type="match status" value="1"/>
</dbReference>
<dbReference type="Gene3D" id="3.40.50.2000">
    <property type="entry name" value="Glycogen Phosphorylase B"/>
    <property type="match status" value="2"/>
</dbReference>
<dbReference type="InterPro" id="IPR002213">
    <property type="entry name" value="UDP_glucos_trans"/>
</dbReference>
<dbReference type="InterPro" id="IPR035595">
    <property type="entry name" value="UDP_glycos_trans_CS"/>
</dbReference>
<dbReference type="PANTHER" id="PTHR48044">
    <property type="entry name" value="GLYCOSYLTRANSFERASE"/>
    <property type="match status" value="1"/>
</dbReference>
<dbReference type="PANTHER" id="PTHR48044:SF27">
    <property type="entry name" value="GLYCOSYLTRANSFERASE"/>
    <property type="match status" value="1"/>
</dbReference>
<dbReference type="Pfam" id="PF00201">
    <property type="entry name" value="UDPGT"/>
    <property type="match status" value="1"/>
</dbReference>
<dbReference type="SUPFAM" id="SSF53756">
    <property type="entry name" value="UDP-Glycosyltransferase/glycogen phosphorylase"/>
    <property type="match status" value="1"/>
</dbReference>
<dbReference type="PROSITE" id="PS00375">
    <property type="entry name" value="UDPGT"/>
    <property type="match status" value="1"/>
</dbReference>
<keyword id="KW-0328">Glycosyltransferase</keyword>
<keyword id="KW-0808">Transferase</keyword>
<proteinExistence type="evidence at protein level"/>
<feature type="chain" id="PRO_0000074166" description="Zeatin O-glucosyltransferase">
    <location>
        <begin position="1"/>
        <end position="459"/>
    </location>
</feature>
<feature type="active site" description="Proton acceptor" evidence="1">
    <location>
        <position position="26"/>
    </location>
</feature>
<feature type="active site" description="Charge relay" evidence="1">
    <location>
        <position position="125"/>
    </location>
</feature>
<feature type="binding site" evidence="2">
    <location>
        <position position="26"/>
    </location>
    <ligand>
        <name>an anthocyanidin</name>
        <dbReference type="ChEBI" id="CHEBI:143576"/>
    </ligand>
</feature>
<feature type="binding site" evidence="1">
    <location>
        <position position="148"/>
    </location>
    <ligand>
        <name>UDP-alpha-D-glucose</name>
        <dbReference type="ChEBI" id="CHEBI:58885"/>
    </ligand>
</feature>
<feature type="binding site" evidence="1">
    <location>
        <position position="335"/>
    </location>
    <ligand>
        <name>UDP-alpha-D-glucose</name>
        <dbReference type="ChEBI" id="CHEBI:58885"/>
    </ligand>
</feature>
<feature type="binding site" evidence="1">
    <location>
        <position position="337"/>
    </location>
    <ligand>
        <name>UDP-alpha-D-glucose</name>
        <dbReference type="ChEBI" id="CHEBI:58885"/>
    </ligand>
</feature>
<feature type="binding site" evidence="1">
    <location>
        <position position="352"/>
    </location>
    <ligand>
        <name>UDP-alpha-D-glucose</name>
        <dbReference type="ChEBI" id="CHEBI:58885"/>
    </ligand>
</feature>
<feature type="binding site" evidence="1">
    <location>
        <position position="355"/>
    </location>
    <ligand>
        <name>UDP-alpha-D-glucose</name>
        <dbReference type="ChEBI" id="CHEBI:58885"/>
    </ligand>
</feature>
<feature type="binding site" evidence="1">
    <location>
        <position position="356"/>
    </location>
    <ligand>
        <name>UDP-alpha-D-glucose</name>
        <dbReference type="ChEBI" id="CHEBI:58885"/>
    </ligand>
</feature>
<feature type="binding site" evidence="1">
    <location>
        <position position="357"/>
    </location>
    <ligand>
        <name>UDP-alpha-D-glucose</name>
        <dbReference type="ChEBI" id="CHEBI:58885"/>
    </ligand>
</feature>
<feature type="binding site" evidence="1">
    <location>
        <position position="360"/>
    </location>
    <ligand>
        <name>UDP-alpha-D-glucose</name>
        <dbReference type="ChEBI" id="CHEBI:58885"/>
    </ligand>
</feature>
<feature type="binding site" evidence="1">
    <location>
        <position position="376"/>
    </location>
    <ligand>
        <name>UDP-alpha-D-glucose</name>
        <dbReference type="ChEBI" id="CHEBI:58885"/>
    </ligand>
</feature>
<feature type="binding site" evidence="1">
    <location>
        <position position="377"/>
    </location>
    <ligand>
        <name>UDP-alpha-D-glucose</name>
        <dbReference type="ChEBI" id="CHEBI:58885"/>
    </ligand>
</feature>
<gene>
    <name evidence="4" type="primary">ZOG1</name>
</gene>
<reference key="1">
    <citation type="journal article" date="1999" name="Proc. Natl. Acad. Sci. U.S.A.">
        <title>Isolation of a cytokinin gene, ZOG1, encoding zeatin O-glucosyltransferase from Phaseolus lunatus.</title>
        <authorList>
            <person name="Martin R.C."/>
            <person name="Mok M.C."/>
            <person name="Mok D.W.S."/>
        </authorList>
    </citation>
    <scope>NUCLEOTIDE SEQUENCE [MRNA]</scope>
    <scope>FUNCTION</scope>
    <scope>CATALYTIC ACTIVITY</scope>
    <source>
        <strain>cv. Kingston</strain>
        <tissue>Immature seed</tissue>
    </source>
</reference>